<protein>
    <recommendedName>
        <fullName evidence="1">Small ribosomal subunit protein uS11c</fullName>
    </recommendedName>
    <alternativeName>
        <fullName evidence="3">30S ribosomal protein S11, chloroplastic</fullName>
    </alternativeName>
</protein>
<dbReference type="EMBL" id="AY582139">
    <property type="protein sequence ID" value="AAT98541.1"/>
    <property type="molecule type" value="Genomic_DNA"/>
</dbReference>
<dbReference type="RefSeq" id="YP_086998.1">
    <property type="nucleotide sequence ID" value="NC_006290.1"/>
</dbReference>
<dbReference type="SMR" id="Q68RX4"/>
<dbReference type="GeneID" id="3021577"/>
<dbReference type="GO" id="GO:0009507">
    <property type="term" value="C:chloroplast"/>
    <property type="evidence" value="ECO:0007669"/>
    <property type="project" value="UniProtKB-SubCell"/>
</dbReference>
<dbReference type="GO" id="GO:1990904">
    <property type="term" value="C:ribonucleoprotein complex"/>
    <property type="evidence" value="ECO:0007669"/>
    <property type="project" value="UniProtKB-KW"/>
</dbReference>
<dbReference type="GO" id="GO:0005840">
    <property type="term" value="C:ribosome"/>
    <property type="evidence" value="ECO:0007669"/>
    <property type="project" value="UniProtKB-KW"/>
</dbReference>
<dbReference type="GO" id="GO:0019843">
    <property type="term" value="F:rRNA binding"/>
    <property type="evidence" value="ECO:0007669"/>
    <property type="project" value="UniProtKB-UniRule"/>
</dbReference>
<dbReference type="GO" id="GO:0003735">
    <property type="term" value="F:structural constituent of ribosome"/>
    <property type="evidence" value="ECO:0007669"/>
    <property type="project" value="InterPro"/>
</dbReference>
<dbReference type="GO" id="GO:0006412">
    <property type="term" value="P:translation"/>
    <property type="evidence" value="ECO:0007669"/>
    <property type="project" value="UniProtKB-UniRule"/>
</dbReference>
<dbReference type="FunFam" id="3.30.420.80:FF:000003">
    <property type="entry name" value="30S ribosomal protein S11, chloroplastic"/>
    <property type="match status" value="1"/>
</dbReference>
<dbReference type="Gene3D" id="3.30.420.80">
    <property type="entry name" value="Ribosomal protein S11"/>
    <property type="match status" value="1"/>
</dbReference>
<dbReference type="HAMAP" id="MF_01310">
    <property type="entry name" value="Ribosomal_uS11"/>
    <property type="match status" value="1"/>
</dbReference>
<dbReference type="InterPro" id="IPR001971">
    <property type="entry name" value="Ribosomal_uS11"/>
</dbReference>
<dbReference type="InterPro" id="IPR019981">
    <property type="entry name" value="Ribosomal_uS11_bac-type"/>
</dbReference>
<dbReference type="InterPro" id="IPR018102">
    <property type="entry name" value="Ribosomal_uS11_CS"/>
</dbReference>
<dbReference type="InterPro" id="IPR036967">
    <property type="entry name" value="Ribosomal_uS11_sf"/>
</dbReference>
<dbReference type="NCBIfam" id="NF003698">
    <property type="entry name" value="PRK05309.1"/>
    <property type="match status" value="1"/>
</dbReference>
<dbReference type="NCBIfam" id="TIGR03632">
    <property type="entry name" value="uS11_bact"/>
    <property type="match status" value="1"/>
</dbReference>
<dbReference type="PANTHER" id="PTHR11759">
    <property type="entry name" value="40S RIBOSOMAL PROTEIN S14/30S RIBOSOMAL PROTEIN S11"/>
    <property type="match status" value="1"/>
</dbReference>
<dbReference type="Pfam" id="PF00411">
    <property type="entry name" value="Ribosomal_S11"/>
    <property type="match status" value="1"/>
</dbReference>
<dbReference type="PIRSF" id="PIRSF002131">
    <property type="entry name" value="Ribosomal_S11"/>
    <property type="match status" value="1"/>
</dbReference>
<dbReference type="SUPFAM" id="SSF53137">
    <property type="entry name" value="Translational machinery components"/>
    <property type="match status" value="1"/>
</dbReference>
<dbReference type="PROSITE" id="PS00054">
    <property type="entry name" value="RIBOSOMAL_S11"/>
    <property type="match status" value="1"/>
</dbReference>
<name>RR11_PANGI</name>
<sequence length="138" mass="14890">MAKAIPRSGSRRSGRIGSRKSTRRIPKGVIHVQASFNNTIVTVTDVRGRVVSWSSAGTCGFKGTRRGTPFAAQTAAGNAIRTVVDQGMQRAEVMIKGPGLGRDAALRAIRRSGILLTFVRDVTPMPHNGCRPPKKRRV</sequence>
<geneLocation type="chloroplast"/>
<keyword id="KW-0150">Chloroplast</keyword>
<keyword id="KW-0934">Plastid</keyword>
<keyword id="KW-0687">Ribonucleoprotein</keyword>
<keyword id="KW-0689">Ribosomal protein</keyword>
<keyword id="KW-0694">RNA-binding</keyword>
<keyword id="KW-0699">rRNA-binding</keyword>
<accession>Q68RX4</accession>
<evidence type="ECO:0000255" key="1">
    <source>
        <dbReference type="HAMAP-Rule" id="MF_01310"/>
    </source>
</evidence>
<evidence type="ECO:0000256" key="2">
    <source>
        <dbReference type="SAM" id="MobiDB-lite"/>
    </source>
</evidence>
<evidence type="ECO:0000305" key="3"/>
<organism>
    <name type="scientific">Panax ginseng</name>
    <name type="common">Korean ginseng</name>
    <dbReference type="NCBI Taxonomy" id="4054"/>
    <lineage>
        <taxon>Eukaryota</taxon>
        <taxon>Viridiplantae</taxon>
        <taxon>Streptophyta</taxon>
        <taxon>Embryophyta</taxon>
        <taxon>Tracheophyta</taxon>
        <taxon>Spermatophyta</taxon>
        <taxon>Magnoliopsida</taxon>
        <taxon>eudicotyledons</taxon>
        <taxon>Gunneridae</taxon>
        <taxon>Pentapetalae</taxon>
        <taxon>asterids</taxon>
        <taxon>campanulids</taxon>
        <taxon>Apiales</taxon>
        <taxon>Araliaceae</taxon>
        <taxon>Panax</taxon>
    </lineage>
</organism>
<reference key="1">
    <citation type="journal article" date="2004" name="DNA Res.">
        <title>Complete chloroplast genome sequence from Korea ginseng (Panax schinseng Nees) and comparative analysis of sequence evolution among 17 vascular plants.</title>
        <authorList>
            <person name="Kim K.-J."/>
            <person name="Lee H.-L."/>
        </authorList>
    </citation>
    <scope>NUCLEOTIDE SEQUENCE [LARGE SCALE GENOMIC DNA]</scope>
</reference>
<feature type="chain" id="PRO_0000123316" description="Small ribosomal subunit protein uS11c">
    <location>
        <begin position="1"/>
        <end position="138"/>
    </location>
</feature>
<feature type="region of interest" description="Disordered" evidence="2">
    <location>
        <begin position="1"/>
        <end position="24"/>
    </location>
</feature>
<feature type="compositionally biased region" description="Basic residues" evidence="2">
    <location>
        <begin position="9"/>
        <end position="24"/>
    </location>
</feature>
<gene>
    <name evidence="1" type="primary">rps11</name>
    <name type="ORF">PSC0809</name>
</gene>
<comment type="subunit">
    <text evidence="1">Part of the 30S ribosomal subunit.</text>
</comment>
<comment type="subcellular location">
    <subcellularLocation>
        <location>Plastid</location>
        <location>Chloroplast</location>
    </subcellularLocation>
</comment>
<comment type="similarity">
    <text evidence="1">Belongs to the universal ribosomal protein uS11 family.</text>
</comment>
<proteinExistence type="inferred from homology"/>